<gene>
    <name evidence="1" type="primary">atpA</name>
    <name type="ordered locus">HY04AAS1_1014</name>
</gene>
<comment type="function">
    <text evidence="1">Produces ATP from ADP in the presence of a proton gradient across the membrane. The alpha chain is a regulatory subunit.</text>
</comment>
<comment type="catalytic activity">
    <reaction evidence="1">
        <text>ATP + H2O + 4 H(+)(in) = ADP + phosphate + 5 H(+)(out)</text>
        <dbReference type="Rhea" id="RHEA:57720"/>
        <dbReference type="ChEBI" id="CHEBI:15377"/>
        <dbReference type="ChEBI" id="CHEBI:15378"/>
        <dbReference type="ChEBI" id="CHEBI:30616"/>
        <dbReference type="ChEBI" id="CHEBI:43474"/>
        <dbReference type="ChEBI" id="CHEBI:456216"/>
        <dbReference type="EC" id="7.1.2.2"/>
    </reaction>
</comment>
<comment type="subunit">
    <text evidence="1">F-type ATPases have 2 components, CF(1) - the catalytic core - and CF(0) - the membrane proton channel. CF(1) has five subunits: alpha(3), beta(3), gamma(1), delta(1), epsilon(1). CF(0) has three main subunits: a(1), b(2) and c(9-12). The alpha and beta chains form an alternating ring which encloses part of the gamma chain. CF(1) is attached to CF(0) by a central stalk formed by the gamma and epsilon chains, while a peripheral stalk is formed by the delta and b chains.</text>
</comment>
<comment type="subcellular location">
    <subcellularLocation>
        <location evidence="1">Cell inner membrane</location>
        <topology evidence="1">Peripheral membrane protein</topology>
    </subcellularLocation>
</comment>
<comment type="similarity">
    <text evidence="1">Belongs to the ATPase alpha/beta chains family.</text>
</comment>
<evidence type="ECO:0000255" key="1">
    <source>
        <dbReference type="HAMAP-Rule" id="MF_01346"/>
    </source>
</evidence>
<accession>B4U989</accession>
<sequence>MTLAYDDALEILKSQLQSFETDIKMEEVGVVYAVGDGVARAYGLDNVMANELLEFDSGEAGLAFNLEEDNVGIIILGSESGIKEGSIVKRTGRILDAPVGEELVGRVIDPLGNPLDGKGPINAKHRSPVEKIAPGIVKRKSVHEPLQTGIKAIDAMIPIGRGQRELIIGDRATGKTTVAIDTILNQKDTDVYCIYVAIGQKKSTTARIIELLEREGAMKYTTVVVASATDPAPLQYLAPFTGCTIGEYFRDNGKHALIVYDDLSKHAEAYRQLSLLVRRPPGREAYPGDVFYLHSRLLERAAKLYDELGAGSLTALPIIETKAGDVSAYIPTNVISITDGQIYLEPDLFNKGIRPAINVGLSVSRVGGSAQIKAMKQVAGTLRLDLAQFRELEAFMQFASDLDKATQDTINRGLRLVELLKQGPYSPIPVEKQVIAIYAGTNGYLDDIPVSSVRKFEMELYGFLDANFKDLLDELKTKKAIDDSVKSKLKTALDKFKASFIP</sequence>
<organism>
    <name type="scientific">Hydrogenobaculum sp. (strain Y04AAS1)</name>
    <dbReference type="NCBI Taxonomy" id="380749"/>
    <lineage>
        <taxon>Bacteria</taxon>
        <taxon>Pseudomonadati</taxon>
        <taxon>Aquificota</taxon>
        <taxon>Aquificia</taxon>
        <taxon>Aquificales</taxon>
        <taxon>Aquificaceae</taxon>
        <taxon>Hydrogenobaculum</taxon>
    </lineage>
</organism>
<reference key="1">
    <citation type="journal article" date="2009" name="J. Bacteriol.">
        <title>Complete and draft genome sequences of six members of the Aquificales.</title>
        <authorList>
            <person name="Reysenbach A.-L."/>
            <person name="Hamamura N."/>
            <person name="Podar M."/>
            <person name="Griffiths E."/>
            <person name="Ferreira S."/>
            <person name="Hochstein R."/>
            <person name="Heidelberg J."/>
            <person name="Johnson J."/>
            <person name="Mead D."/>
            <person name="Pohorille A."/>
            <person name="Sarmiento M."/>
            <person name="Schweighofer K."/>
            <person name="Seshadri R."/>
            <person name="Voytek M.A."/>
        </authorList>
    </citation>
    <scope>NUCLEOTIDE SEQUENCE [LARGE SCALE GENOMIC DNA]</scope>
    <source>
        <strain>Y04AAS1</strain>
    </source>
</reference>
<dbReference type="EC" id="7.1.2.2" evidence="1"/>
<dbReference type="EMBL" id="CP001130">
    <property type="protein sequence ID" value="ACG57700.1"/>
    <property type="molecule type" value="Genomic_DNA"/>
</dbReference>
<dbReference type="RefSeq" id="WP_012514056.1">
    <property type="nucleotide sequence ID" value="NC_011126.1"/>
</dbReference>
<dbReference type="SMR" id="B4U989"/>
<dbReference type="STRING" id="380749.HY04AAS1_1014"/>
<dbReference type="KEGG" id="hya:HY04AAS1_1014"/>
<dbReference type="eggNOG" id="COG0056">
    <property type="taxonomic scope" value="Bacteria"/>
</dbReference>
<dbReference type="HOGENOM" id="CLU_010091_2_1_0"/>
<dbReference type="OrthoDB" id="9803053at2"/>
<dbReference type="GO" id="GO:0005886">
    <property type="term" value="C:plasma membrane"/>
    <property type="evidence" value="ECO:0007669"/>
    <property type="project" value="UniProtKB-SubCell"/>
</dbReference>
<dbReference type="GO" id="GO:0045259">
    <property type="term" value="C:proton-transporting ATP synthase complex"/>
    <property type="evidence" value="ECO:0007669"/>
    <property type="project" value="UniProtKB-KW"/>
</dbReference>
<dbReference type="GO" id="GO:0043531">
    <property type="term" value="F:ADP binding"/>
    <property type="evidence" value="ECO:0007669"/>
    <property type="project" value="TreeGrafter"/>
</dbReference>
<dbReference type="GO" id="GO:0005524">
    <property type="term" value="F:ATP binding"/>
    <property type="evidence" value="ECO:0007669"/>
    <property type="project" value="UniProtKB-UniRule"/>
</dbReference>
<dbReference type="GO" id="GO:0046933">
    <property type="term" value="F:proton-transporting ATP synthase activity, rotational mechanism"/>
    <property type="evidence" value="ECO:0007669"/>
    <property type="project" value="UniProtKB-UniRule"/>
</dbReference>
<dbReference type="CDD" id="cd18113">
    <property type="entry name" value="ATP-synt_F1_alpha_C"/>
    <property type="match status" value="1"/>
</dbReference>
<dbReference type="CDD" id="cd18116">
    <property type="entry name" value="ATP-synt_F1_alpha_N"/>
    <property type="match status" value="1"/>
</dbReference>
<dbReference type="CDD" id="cd01132">
    <property type="entry name" value="F1-ATPase_alpha_CD"/>
    <property type="match status" value="1"/>
</dbReference>
<dbReference type="FunFam" id="1.20.150.20:FF:000001">
    <property type="entry name" value="ATP synthase subunit alpha"/>
    <property type="match status" value="1"/>
</dbReference>
<dbReference type="FunFam" id="2.40.30.20:FF:000001">
    <property type="entry name" value="ATP synthase subunit alpha"/>
    <property type="match status" value="1"/>
</dbReference>
<dbReference type="FunFam" id="3.40.50.300:FF:000002">
    <property type="entry name" value="ATP synthase subunit alpha"/>
    <property type="match status" value="1"/>
</dbReference>
<dbReference type="Gene3D" id="2.40.30.20">
    <property type="match status" value="1"/>
</dbReference>
<dbReference type="Gene3D" id="1.20.150.20">
    <property type="entry name" value="ATP synthase alpha/beta chain, C-terminal domain"/>
    <property type="match status" value="1"/>
</dbReference>
<dbReference type="Gene3D" id="3.40.50.300">
    <property type="entry name" value="P-loop containing nucleotide triphosphate hydrolases"/>
    <property type="match status" value="1"/>
</dbReference>
<dbReference type="HAMAP" id="MF_01346">
    <property type="entry name" value="ATP_synth_alpha_bact"/>
    <property type="match status" value="1"/>
</dbReference>
<dbReference type="InterPro" id="IPR023366">
    <property type="entry name" value="ATP_synth_asu-like_sf"/>
</dbReference>
<dbReference type="InterPro" id="IPR000793">
    <property type="entry name" value="ATP_synth_asu_C"/>
</dbReference>
<dbReference type="InterPro" id="IPR038376">
    <property type="entry name" value="ATP_synth_asu_C_sf"/>
</dbReference>
<dbReference type="InterPro" id="IPR033732">
    <property type="entry name" value="ATP_synth_F1_a_nt-bd_dom"/>
</dbReference>
<dbReference type="InterPro" id="IPR005294">
    <property type="entry name" value="ATP_synth_F1_asu"/>
</dbReference>
<dbReference type="InterPro" id="IPR020003">
    <property type="entry name" value="ATPase_a/bsu_AS"/>
</dbReference>
<dbReference type="InterPro" id="IPR004100">
    <property type="entry name" value="ATPase_F1/V1/A1_a/bsu_N"/>
</dbReference>
<dbReference type="InterPro" id="IPR036121">
    <property type="entry name" value="ATPase_F1/V1/A1_a/bsu_N_sf"/>
</dbReference>
<dbReference type="InterPro" id="IPR000194">
    <property type="entry name" value="ATPase_F1/V1/A1_a/bsu_nucl-bd"/>
</dbReference>
<dbReference type="InterPro" id="IPR027417">
    <property type="entry name" value="P-loop_NTPase"/>
</dbReference>
<dbReference type="NCBIfam" id="TIGR00962">
    <property type="entry name" value="atpA"/>
    <property type="match status" value="1"/>
</dbReference>
<dbReference type="NCBIfam" id="NF009884">
    <property type="entry name" value="PRK13343.1"/>
    <property type="match status" value="1"/>
</dbReference>
<dbReference type="PANTHER" id="PTHR48082">
    <property type="entry name" value="ATP SYNTHASE SUBUNIT ALPHA, MITOCHONDRIAL"/>
    <property type="match status" value="1"/>
</dbReference>
<dbReference type="PANTHER" id="PTHR48082:SF2">
    <property type="entry name" value="ATP SYNTHASE SUBUNIT ALPHA, MITOCHONDRIAL"/>
    <property type="match status" value="1"/>
</dbReference>
<dbReference type="Pfam" id="PF00006">
    <property type="entry name" value="ATP-synt_ab"/>
    <property type="match status" value="1"/>
</dbReference>
<dbReference type="Pfam" id="PF00306">
    <property type="entry name" value="ATP-synt_ab_C"/>
    <property type="match status" value="1"/>
</dbReference>
<dbReference type="Pfam" id="PF02874">
    <property type="entry name" value="ATP-synt_ab_N"/>
    <property type="match status" value="1"/>
</dbReference>
<dbReference type="PIRSF" id="PIRSF039088">
    <property type="entry name" value="F_ATPase_subunit_alpha"/>
    <property type="match status" value="1"/>
</dbReference>
<dbReference type="SUPFAM" id="SSF47917">
    <property type="entry name" value="C-terminal domain of alpha and beta subunits of F1 ATP synthase"/>
    <property type="match status" value="1"/>
</dbReference>
<dbReference type="SUPFAM" id="SSF50615">
    <property type="entry name" value="N-terminal domain of alpha and beta subunits of F1 ATP synthase"/>
    <property type="match status" value="1"/>
</dbReference>
<dbReference type="SUPFAM" id="SSF52540">
    <property type="entry name" value="P-loop containing nucleoside triphosphate hydrolases"/>
    <property type="match status" value="1"/>
</dbReference>
<dbReference type="PROSITE" id="PS00152">
    <property type="entry name" value="ATPASE_ALPHA_BETA"/>
    <property type="match status" value="1"/>
</dbReference>
<feature type="chain" id="PRO_1000143394" description="ATP synthase subunit alpha">
    <location>
        <begin position="1"/>
        <end position="502"/>
    </location>
</feature>
<feature type="binding site" evidence="1">
    <location>
        <begin position="169"/>
        <end position="176"/>
    </location>
    <ligand>
        <name>ATP</name>
        <dbReference type="ChEBI" id="CHEBI:30616"/>
    </ligand>
</feature>
<feature type="site" description="Required for activity" evidence="1">
    <location>
        <position position="362"/>
    </location>
</feature>
<keyword id="KW-0066">ATP synthesis</keyword>
<keyword id="KW-0067">ATP-binding</keyword>
<keyword id="KW-0997">Cell inner membrane</keyword>
<keyword id="KW-1003">Cell membrane</keyword>
<keyword id="KW-0139">CF(1)</keyword>
<keyword id="KW-0375">Hydrogen ion transport</keyword>
<keyword id="KW-0406">Ion transport</keyword>
<keyword id="KW-0472">Membrane</keyword>
<keyword id="KW-0547">Nucleotide-binding</keyword>
<keyword id="KW-1278">Translocase</keyword>
<keyword id="KW-0813">Transport</keyword>
<name>ATPA_HYDS0</name>
<protein>
    <recommendedName>
        <fullName evidence="1">ATP synthase subunit alpha</fullName>
        <ecNumber evidence="1">7.1.2.2</ecNumber>
    </recommendedName>
    <alternativeName>
        <fullName evidence="1">ATP synthase F1 sector subunit alpha</fullName>
    </alternativeName>
    <alternativeName>
        <fullName evidence="1">F-ATPase subunit alpha</fullName>
    </alternativeName>
</protein>
<proteinExistence type="inferred from homology"/>